<protein>
    <recommendedName>
        <fullName>Glutaredoxin-1</fullName>
    </recommendedName>
    <alternativeName>
        <fullName>Thioltransferase-1</fullName>
        <shortName>TTase-1</shortName>
    </alternativeName>
</protein>
<name>GLRX1_RABIT</name>
<feature type="chain" id="PRO_0000141603" description="Glutaredoxin-1">
    <location>
        <begin position="1"/>
        <end position="106"/>
    </location>
</feature>
<feature type="domain" description="Glutaredoxin" evidence="3">
    <location>
        <begin position="2"/>
        <end position="105"/>
    </location>
</feature>
<feature type="modified residue" description="N-acetylalanine" evidence="1">
    <location>
        <position position="1"/>
    </location>
</feature>
<feature type="modified residue" description="N6-succinyllysine" evidence="2">
    <location>
        <position position="8"/>
    </location>
</feature>
<feature type="disulfide bond" description="Redox-active">
    <location>
        <begin position="22"/>
        <end position="25"/>
    </location>
</feature>
<feature type="disulfide bond">
    <location>
        <begin position="78"/>
        <end position="82"/>
    </location>
</feature>
<accession>P12864</accession>
<evidence type="ECO:0000250" key="1">
    <source>
        <dbReference type="UniProtKB" id="P10575"/>
    </source>
</evidence>
<evidence type="ECO:0000250" key="2">
    <source>
        <dbReference type="UniProtKB" id="Q9QUH0"/>
    </source>
</evidence>
<evidence type="ECO:0000255" key="3">
    <source>
        <dbReference type="PROSITE-ProRule" id="PRU00686"/>
    </source>
</evidence>
<evidence type="ECO:0000305" key="4"/>
<gene>
    <name type="primary">GLRX</name>
    <name type="synonym">GRX</name>
</gene>
<sequence>AQEFVNSKIQPGKVVVFIKPTCPYCRKTQEILSQLPFKQGLLEFVDITATSDMSEIQDYLQQLTGARTVPRVFLGKDCIGGCSDLIAMQEKGELLARLKEMGALRQ</sequence>
<dbReference type="PIR" id="A32682">
    <property type="entry name" value="GDRB"/>
</dbReference>
<dbReference type="SMR" id="P12864"/>
<dbReference type="FunCoup" id="P12864">
    <property type="interactions" value="286"/>
</dbReference>
<dbReference type="IntAct" id="P12864">
    <property type="interactions" value="1"/>
</dbReference>
<dbReference type="STRING" id="9986.ENSOCUP00000013612"/>
<dbReference type="PaxDb" id="9986-ENSOCUP00000013612"/>
<dbReference type="eggNOG" id="KOG1752">
    <property type="taxonomic scope" value="Eukaryota"/>
</dbReference>
<dbReference type="InParanoid" id="P12864"/>
<dbReference type="Proteomes" id="UP000001811">
    <property type="component" value="Unplaced"/>
</dbReference>
<dbReference type="GO" id="GO:0005739">
    <property type="term" value="C:mitochondrion"/>
    <property type="evidence" value="ECO:0007669"/>
    <property type="project" value="TreeGrafter"/>
</dbReference>
<dbReference type="GO" id="GO:0051117">
    <property type="term" value="F:ATPase binding"/>
    <property type="evidence" value="ECO:0000353"/>
    <property type="project" value="BHF-UCL"/>
</dbReference>
<dbReference type="GO" id="GO:0015038">
    <property type="term" value="F:glutathione disulfide oxidoreductase activity"/>
    <property type="evidence" value="ECO:0000314"/>
    <property type="project" value="BHF-UCL"/>
</dbReference>
<dbReference type="CDD" id="cd03419">
    <property type="entry name" value="GRX_GRXh_1_2_like"/>
    <property type="match status" value="1"/>
</dbReference>
<dbReference type="Gene3D" id="3.40.30.10">
    <property type="entry name" value="Glutaredoxin"/>
    <property type="match status" value="1"/>
</dbReference>
<dbReference type="InterPro" id="IPR011767">
    <property type="entry name" value="GLR_AS"/>
</dbReference>
<dbReference type="InterPro" id="IPR047185">
    <property type="entry name" value="GLRX1"/>
</dbReference>
<dbReference type="InterPro" id="IPR002109">
    <property type="entry name" value="Glutaredoxin"/>
</dbReference>
<dbReference type="InterPro" id="IPR011899">
    <property type="entry name" value="Glutaredoxin_euk/vir"/>
</dbReference>
<dbReference type="InterPro" id="IPR014025">
    <property type="entry name" value="Glutaredoxin_subgr"/>
</dbReference>
<dbReference type="InterPro" id="IPR036249">
    <property type="entry name" value="Thioredoxin-like_sf"/>
</dbReference>
<dbReference type="NCBIfam" id="TIGR02180">
    <property type="entry name" value="GRX_euk"/>
    <property type="match status" value="1"/>
</dbReference>
<dbReference type="PANTHER" id="PTHR46185">
    <property type="entry name" value="GLUTAREDOXIN-1"/>
    <property type="match status" value="1"/>
</dbReference>
<dbReference type="PANTHER" id="PTHR46185:SF1">
    <property type="entry name" value="GLUTAREDOXIN-1"/>
    <property type="match status" value="1"/>
</dbReference>
<dbReference type="Pfam" id="PF00462">
    <property type="entry name" value="Glutaredoxin"/>
    <property type="match status" value="1"/>
</dbReference>
<dbReference type="PRINTS" id="PR00160">
    <property type="entry name" value="GLUTAREDOXIN"/>
</dbReference>
<dbReference type="SUPFAM" id="SSF52833">
    <property type="entry name" value="Thioredoxin-like"/>
    <property type="match status" value="1"/>
</dbReference>
<dbReference type="PROSITE" id="PS00195">
    <property type="entry name" value="GLUTAREDOXIN_1"/>
    <property type="match status" value="1"/>
</dbReference>
<dbReference type="PROSITE" id="PS51354">
    <property type="entry name" value="GLUTAREDOXIN_2"/>
    <property type="match status" value="1"/>
</dbReference>
<comment type="function">
    <text>Has a glutathione-disulfide oxidoreductase activity in the presence of NADPH and glutathione reductase. Reduces low molecular weight disulfides and proteins.</text>
</comment>
<comment type="subcellular location">
    <subcellularLocation>
        <location>Cytoplasm</location>
    </subcellularLocation>
</comment>
<comment type="similarity">
    <text evidence="4">Belongs to the glutaredoxin family.</text>
</comment>
<organism>
    <name type="scientific">Oryctolagus cuniculus</name>
    <name type="common">Rabbit</name>
    <dbReference type="NCBI Taxonomy" id="9986"/>
    <lineage>
        <taxon>Eukaryota</taxon>
        <taxon>Metazoa</taxon>
        <taxon>Chordata</taxon>
        <taxon>Craniata</taxon>
        <taxon>Vertebrata</taxon>
        <taxon>Euteleostomi</taxon>
        <taxon>Mammalia</taxon>
        <taxon>Eutheria</taxon>
        <taxon>Euarchontoglires</taxon>
        <taxon>Glires</taxon>
        <taxon>Lagomorpha</taxon>
        <taxon>Leporidae</taxon>
        <taxon>Oryctolagus</taxon>
    </lineage>
</organism>
<reference key="1">
    <citation type="journal article" date="1989" name="J. Biol. Chem.">
        <title>Glutaredoxin from rabbit bone marrow. Purification, characterization, and amino acid sequence determined by tandem mass spectrometry.</title>
        <authorList>
            <person name="Hopper S."/>
            <person name="Johnson R.S."/>
            <person name="Vath J.E."/>
            <person name="Biemann K."/>
        </authorList>
    </citation>
    <scope>PROTEIN SEQUENCE</scope>
    <source>
        <tissue>Bone marrow</tissue>
    </source>
</reference>
<proteinExistence type="evidence at protein level"/>
<keyword id="KW-0007">Acetylation</keyword>
<keyword id="KW-0963">Cytoplasm</keyword>
<keyword id="KW-0903">Direct protein sequencing</keyword>
<keyword id="KW-1015">Disulfide bond</keyword>
<keyword id="KW-0249">Electron transport</keyword>
<keyword id="KW-0676">Redox-active center</keyword>
<keyword id="KW-1185">Reference proteome</keyword>
<keyword id="KW-0813">Transport</keyword>